<sequence length="138" mass="15840">MQHTFALIKPDAVQRNLIGAIINMIEKNDFYISAMKMLQMNRQQAEGFYSVHRERPFFNELVDYMISGPIVSLILTGENAVTRYRELMGATNPQNAQEGTIRKSFAISLMENAVHGSDSDENAIIEINYFFNAFERIR</sequence>
<keyword id="KW-0067">ATP-binding</keyword>
<keyword id="KW-0963">Cytoplasm</keyword>
<keyword id="KW-0418">Kinase</keyword>
<keyword id="KW-0460">Magnesium</keyword>
<keyword id="KW-0479">Metal-binding</keyword>
<keyword id="KW-0546">Nucleotide metabolism</keyword>
<keyword id="KW-0547">Nucleotide-binding</keyword>
<keyword id="KW-0597">Phosphoprotein</keyword>
<keyword id="KW-1185">Reference proteome</keyword>
<keyword id="KW-0808">Transferase</keyword>
<feature type="chain" id="PRO_0000267785" description="Nucleoside diphosphate kinase">
    <location>
        <begin position="1"/>
        <end position="138"/>
    </location>
</feature>
<feature type="active site" description="Pros-phosphohistidine intermediate" evidence="1">
    <location>
        <position position="115"/>
    </location>
</feature>
<feature type="binding site" evidence="1">
    <location>
        <position position="9"/>
    </location>
    <ligand>
        <name>ATP</name>
        <dbReference type="ChEBI" id="CHEBI:30616"/>
    </ligand>
</feature>
<feature type="binding site" evidence="1">
    <location>
        <position position="57"/>
    </location>
    <ligand>
        <name>ATP</name>
        <dbReference type="ChEBI" id="CHEBI:30616"/>
    </ligand>
</feature>
<feature type="binding site" evidence="1">
    <location>
        <position position="85"/>
    </location>
    <ligand>
        <name>ATP</name>
        <dbReference type="ChEBI" id="CHEBI:30616"/>
    </ligand>
</feature>
<feature type="binding site" evidence="1">
    <location>
        <position position="91"/>
    </location>
    <ligand>
        <name>ATP</name>
        <dbReference type="ChEBI" id="CHEBI:30616"/>
    </ligand>
</feature>
<feature type="binding site" evidence="1">
    <location>
        <position position="102"/>
    </location>
    <ligand>
        <name>ATP</name>
        <dbReference type="ChEBI" id="CHEBI:30616"/>
    </ligand>
</feature>
<feature type="binding site" evidence="1">
    <location>
        <position position="112"/>
    </location>
    <ligand>
        <name>ATP</name>
        <dbReference type="ChEBI" id="CHEBI:30616"/>
    </ligand>
</feature>
<reference key="1">
    <citation type="submission" date="2005-11" db="EMBL/GenBank/DDBJ databases">
        <title>The complete genome sequence of Lawsonia intracellularis: the causative agent of proliferative enteropathy.</title>
        <authorList>
            <person name="Kaur K."/>
            <person name="Zhang Q."/>
            <person name="Beckler D."/>
            <person name="Munir S."/>
            <person name="Li L."/>
            <person name="Kinsley K."/>
            <person name="Herron L."/>
            <person name="Peterson A."/>
            <person name="May B."/>
            <person name="Singh S."/>
            <person name="Gebhart C."/>
            <person name="Kapur V."/>
        </authorList>
    </citation>
    <scope>NUCLEOTIDE SEQUENCE [LARGE SCALE GENOMIC DNA]</scope>
    <source>
        <strain>PHE/MN1-00</strain>
    </source>
</reference>
<dbReference type="EC" id="2.7.4.6" evidence="1"/>
<dbReference type="EMBL" id="AM180252">
    <property type="protein sequence ID" value="CAJ55175.1"/>
    <property type="molecule type" value="Genomic_DNA"/>
</dbReference>
<dbReference type="RefSeq" id="WP_011527204.1">
    <property type="nucleotide sequence ID" value="NC_008011.1"/>
</dbReference>
<dbReference type="SMR" id="Q1MPA2"/>
<dbReference type="STRING" id="363253.LI1121"/>
<dbReference type="KEGG" id="lip:LI1121"/>
<dbReference type="eggNOG" id="COG0105">
    <property type="taxonomic scope" value="Bacteria"/>
</dbReference>
<dbReference type="HOGENOM" id="CLU_060216_8_1_7"/>
<dbReference type="OrthoDB" id="9801161at2"/>
<dbReference type="Proteomes" id="UP000002430">
    <property type="component" value="Chromosome"/>
</dbReference>
<dbReference type="GO" id="GO:0005737">
    <property type="term" value="C:cytoplasm"/>
    <property type="evidence" value="ECO:0007669"/>
    <property type="project" value="UniProtKB-SubCell"/>
</dbReference>
<dbReference type="GO" id="GO:0005524">
    <property type="term" value="F:ATP binding"/>
    <property type="evidence" value="ECO:0007669"/>
    <property type="project" value="UniProtKB-UniRule"/>
</dbReference>
<dbReference type="GO" id="GO:0046872">
    <property type="term" value="F:metal ion binding"/>
    <property type="evidence" value="ECO:0007669"/>
    <property type="project" value="UniProtKB-KW"/>
</dbReference>
<dbReference type="GO" id="GO:0004550">
    <property type="term" value="F:nucleoside diphosphate kinase activity"/>
    <property type="evidence" value="ECO:0007669"/>
    <property type="project" value="UniProtKB-UniRule"/>
</dbReference>
<dbReference type="GO" id="GO:0006241">
    <property type="term" value="P:CTP biosynthetic process"/>
    <property type="evidence" value="ECO:0007669"/>
    <property type="project" value="UniProtKB-UniRule"/>
</dbReference>
<dbReference type="GO" id="GO:0006183">
    <property type="term" value="P:GTP biosynthetic process"/>
    <property type="evidence" value="ECO:0007669"/>
    <property type="project" value="UniProtKB-UniRule"/>
</dbReference>
<dbReference type="GO" id="GO:0006228">
    <property type="term" value="P:UTP biosynthetic process"/>
    <property type="evidence" value="ECO:0007669"/>
    <property type="project" value="UniProtKB-UniRule"/>
</dbReference>
<dbReference type="CDD" id="cd04413">
    <property type="entry name" value="NDPk_I"/>
    <property type="match status" value="1"/>
</dbReference>
<dbReference type="FunFam" id="3.30.70.141:FF:000003">
    <property type="entry name" value="Nucleoside diphosphate kinase"/>
    <property type="match status" value="1"/>
</dbReference>
<dbReference type="Gene3D" id="3.30.70.141">
    <property type="entry name" value="Nucleoside diphosphate kinase-like domain"/>
    <property type="match status" value="1"/>
</dbReference>
<dbReference type="HAMAP" id="MF_00451">
    <property type="entry name" value="NDP_kinase"/>
    <property type="match status" value="1"/>
</dbReference>
<dbReference type="InterPro" id="IPR034907">
    <property type="entry name" value="NDK-like_dom"/>
</dbReference>
<dbReference type="InterPro" id="IPR036850">
    <property type="entry name" value="NDK-like_dom_sf"/>
</dbReference>
<dbReference type="InterPro" id="IPR001564">
    <property type="entry name" value="Nucleoside_diP_kinase"/>
</dbReference>
<dbReference type="NCBIfam" id="NF001908">
    <property type="entry name" value="PRK00668.1"/>
    <property type="match status" value="1"/>
</dbReference>
<dbReference type="PANTHER" id="PTHR46161">
    <property type="entry name" value="NUCLEOSIDE DIPHOSPHATE KINASE"/>
    <property type="match status" value="1"/>
</dbReference>
<dbReference type="PANTHER" id="PTHR46161:SF3">
    <property type="entry name" value="NUCLEOSIDE DIPHOSPHATE KINASE DDB_G0292928-RELATED"/>
    <property type="match status" value="1"/>
</dbReference>
<dbReference type="Pfam" id="PF00334">
    <property type="entry name" value="NDK"/>
    <property type="match status" value="1"/>
</dbReference>
<dbReference type="PRINTS" id="PR01243">
    <property type="entry name" value="NUCDPKINASE"/>
</dbReference>
<dbReference type="SMART" id="SM00562">
    <property type="entry name" value="NDK"/>
    <property type="match status" value="1"/>
</dbReference>
<dbReference type="SUPFAM" id="SSF54919">
    <property type="entry name" value="Nucleoside diphosphate kinase, NDK"/>
    <property type="match status" value="1"/>
</dbReference>
<dbReference type="PROSITE" id="PS51374">
    <property type="entry name" value="NDPK_LIKE"/>
    <property type="match status" value="1"/>
</dbReference>
<name>NDK_LAWIP</name>
<accession>Q1MPA2</accession>
<comment type="function">
    <text evidence="1">Major role in the synthesis of nucleoside triphosphates other than ATP. The ATP gamma phosphate is transferred to the NDP beta phosphate via a ping-pong mechanism, using a phosphorylated active-site intermediate.</text>
</comment>
<comment type="catalytic activity">
    <reaction evidence="1">
        <text>a 2'-deoxyribonucleoside 5'-diphosphate + ATP = a 2'-deoxyribonucleoside 5'-triphosphate + ADP</text>
        <dbReference type="Rhea" id="RHEA:44640"/>
        <dbReference type="ChEBI" id="CHEBI:30616"/>
        <dbReference type="ChEBI" id="CHEBI:61560"/>
        <dbReference type="ChEBI" id="CHEBI:73316"/>
        <dbReference type="ChEBI" id="CHEBI:456216"/>
        <dbReference type="EC" id="2.7.4.6"/>
    </reaction>
</comment>
<comment type="catalytic activity">
    <reaction evidence="1">
        <text>a ribonucleoside 5'-diphosphate + ATP = a ribonucleoside 5'-triphosphate + ADP</text>
        <dbReference type="Rhea" id="RHEA:18113"/>
        <dbReference type="ChEBI" id="CHEBI:30616"/>
        <dbReference type="ChEBI" id="CHEBI:57930"/>
        <dbReference type="ChEBI" id="CHEBI:61557"/>
        <dbReference type="ChEBI" id="CHEBI:456216"/>
        <dbReference type="EC" id="2.7.4.6"/>
    </reaction>
</comment>
<comment type="cofactor">
    <cofactor evidence="1">
        <name>Mg(2+)</name>
        <dbReference type="ChEBI" id="CHEBI:18420"/>
    </cofactor>
</comment>
<comment type="subunit">
    <text evidence="1">Homotetramer.</text>
</comment>
<comment type="subcellular location">
    <subcellularLocation>
        <location evidence="1">Cytoplasm</location>
    </subcellularLocation>
</comment>
<comment type="similarity">
    <text evidence="1">Belongs to the NDK family.</text>
</comment>
<protein>
    <recommendedName>
        <fullName evidence="1">Nucleoside diphosphate kinase</fullName>
        <shortName evidence="1">NDK</shortName>
        <shortName evidence="1">NDP kinase</shortName>
        <ecNumber evidence="1">2.7.4.6</ecNumber>
    </recommendedName>
    <alternativeName>
        <fullName evidence="1">Nucleoside-2-P kinase</fullName>
    </alternativeName>
</protein>
<gene>
    <name evidence="1" type="primary">ndk</name>
    <name type="ordered locus">LI1121</name>
</gene>
<organism>
    <name type="scientific">Lawsonia intracellularis (strain PHE/MN1-00)</name>
    <dbReference type="NCBI Taxonomy" id="363253"/>
    <lineage>
        <taxon>Bacteria</taxon>
        <taxon>Pseudomonadati</taxon>
        <taxon>Thermodesulfobacteriota</taxon>
        <taxon>Desulfovibrionia</taxon>
        <taxon>Desulfovibrionales</taxon>
        <taxon>Desulfovibrionaceae</taxon>
        <taxon>Lawsonia</taxon>
    </lineage>
</organism>
<evidence type="ECO:0000255" key="1">
    <source>
        <dbReference type="HAMAP-Rule" id="MF_00451"/>
    </source>
</evidence>
<proteinExistence type="inferred from homology"/>